<sequence>MLQLSLSRLGMGSLTASPWHLLLLGGASWILARILAWIYTFYDNCCRLRCFPQPPKPSWFWGHLTLMKNNEEGMQFIAHLGRNFRDIHLSWVGPVYPILRLVHPNVIAPLLQASAAVAPKEMTLYGFLKPWLGDGLLMSAGEKWNHHRRLLTPAFHFDILKSYVKIFNKSVNTMHAKWQRLTAKGSARLDMFEHISLMTLDSLQKCIFSFDSNCQESNSEYIAAILELSSLIVKRQRQPFLYLDFLYYLTADGRRFRKACDVVHNFTDAVIRERRSTLNTQGVDEFLKARAKTKTLDFIDVLLLAKDEHGKGLSDVDIRAEADTFMFGGHDTTASALSWILYNLARHPEYQERCRQEVRELLRDREPEEIEWDDLAQLPFLTMCIKESLRLHPPVLLISRCCSQDIVLPDGRVIPKGNICVISIFGVHHNPSVWPDPEVYNPFRFDPENPQKRSPLAFIPFSAGPRNCIGQTFAMSEIKVALALTLLRFCVLPDDKEPRRKPELILRAEGGLWLRVEPLSTVTSQLPWDLLAHPPTS</sequence>
<organism>
    <name type="scientific">Rattus norvegicus</name>
    <name type="common">Rat</name>
    <dbReference type="NCBI Taxonomy" id="10116"/>
    <lineage>
        <taxon>Eukaryota</taxon>
        <taxon>Metazoa</taxon>
        <taxon>Chordata</taxon>
        <taxon>Craniata</taxon>
        <taxon>Vertebrata</taxon>
        <taxon>Euteleostomi</taxon>
        <taxon>Mammalia</taxon>
        <taxon>Eutheria</taxon>
        <taxon>Euarchontoglires</taxon>
        <taxon>Glires</taxon>
        <taxon>Rodentia</taxon>
        <taxon>Myomorpha</taxon>
        <taxon>Muroidea</taxon>
        <taxon>Muridae</taxon>
        <taxon>Murinae</taxon>
        <taxon>Rattus</taxon>
    </lineage>
</organism>
<comment type="catalytic activity">
    <reaction>
        <text>an organic molecule + reduced [NADPH--hemoprotein reductase] + O2 = an alcohol + oxidized [NADPH--hemoprotein reductase] + H2O + H(+)</text>
        <dbReference type="Rhea" id="RHEA:17149"/>
        <dbReference type="Rhea" id="RHEA-COMP:11964"/>
        <dbReference type="Rhea" id="RHEA-COMP:11965"/>
        <dbReference type="ChEBI" id="CHEBI:15377"/>
        <dbReference type="ChEBI" id="CHEBI:15378"/>
        <dbReference type="ChEBI" id="CHEBI:15379"/>
        <dbReference type="ChEBI" id="CHEBI:30879"/>
        <dbReference type="ChEBI" id="CHEBI:57618"/>
        <dbReference type="ChEBI" id="CHEBI:58210"/>
        <dbReference type="ChEBI" id="CHEBI:142491"/>
        <dbReference type="EC" id="1.14.14.1"/>
    </reaction>
</comment>
<comment type="cofactor">
    <cofactor evidence="1">
        <name>heme</name>
        <dbReference type="ChEBI" id="CHEBI:30413"/>
    </cofactor>
</comment>
<comment type="subcellular location">
    <subcellularLocation>
        <location>Endoplasmic reticulum membrane</location>
        <topology>Peripheral membrane protein</topology>
    </subcellularLocation>
    <subcellularLocation>
        <location>Microsome membrane</location>
        <topology>Peripheral membrane protein</topology>
    </subcellularLocation>
</comment>
<comment type="tissue specificity">
    <text>High expression in liver and kidney. Lower expression in brain.</text>
</comment>
<comment type="similarity">
    <text evidence="2">Belongs to the cytochrome P450 family.</text>
</comment>
<reference key="1">
    <citation type="journal article" date="1995" name="Biochem. Biophys. Res. Commun.">
        <title>cDNA cloning of three new forms of rat brain cytochrome P450 belonging to the CYP4F subfamily.</title>
        <authorList>
            <person name="Kawashima H."/>
            <person name="Strobel H.W."/>
        </authorList>
    </citation>
    <scope>NUCLEOTIDE SEQUENCE [MRNA]</scope>
    <source>
        <strain>Sprague-Dawley</strain>
        <tissue>Brain</tissue>
    </source>
</reference>
<proteinExistence type="evidence at transcript level"/>
<protein>
    <recommendedName>
        <fullName>Cytochrome P450 4F6</fullName>
        <ecNumber>1.14.14.1</ecNumber>
    </recommendedName>
    <alternativeName>
        <fullName>CYPIVF6</fullName>
    </alternativeName>
</protein>
<gene>
    <name type="primary">Cyp4f6</name>
</gene>
<accession>P51871</accession>
<keyword id="KW-0256">Endoplasmic reticulum</keyword>
<keyword id="KW-0349">Heme</keyword>
<keyword id="KW-0408">Iron</keyword>
<keyword id="KW-0472">Membrane</keyword>
<keyword id="KW-0479">Metal-binding</keyword>
<keyword id="KW-0492">Microsome</keyword>
<keyword id="KW-0503">Monooxygenase</keyword>
<keyword id="KW-0560">Oxidoreductase</keyword>
<keyword id="KW-1185">Reference proteome</keyword>
<feature type="chain" id="PRO_0000051854" description="Cytochrome P450 4F6">
    <location>
        <begin position="1"/>
        <end position="537"/>
    </location>
</feature>
<feature type="binding site" description="axial binding residue" evidence="1">
    <location>
        <position position="468"/>
    </location>
    <ligand>
        <name>heme</name>
        <dbReference type="ChEBI" id="CHEBI:30413"/>
    </ligand>
    <ligandPart>
        <name>Fe</name>
        <dbReference type="ChEBI" id="CHEBI:18248"/>
    </ligandPart>
</feature>
<dbReference type="EC" id="1.14.14.1"/>
<dbReference type="EMBL" id="U39208">
    <property type="protein sequence ID" value="AAC52360.1"/>
    <property type="molecule type" value="mRNA"/>
</dbReference>
<dbReference type="PIR" id="JC4534">
    <property type="entry name" value="JC4534"/>
</dbReference>
<dbReference type="RefSeq" id="NP_695230.1">
    <property type="nucleotide sequence ID" value="NM_153318.1"/>
</dbReference>
<dbReference type="SMR" id="P51871"/>
<dbReference type="FunCoup" id="P51871">
    <property type="interactions" value="186"/>
</dbReference>
<dbReference type="STRING" id="10116.ENSRNOP00000059924"/>
<dbReference type="ChEMBL" id="CHEMBL3509599"/>
<dbReference type="PhosphoSitePlus" id="P51871"/>
<dbReference type="PaxDb" id="10116-ENSRNOP00000006335"/>
<dbReference type="GeneID" id="266689"/>
<dbReference type="KEGG" id="rno:266689"/>
<dbReference type="UCSC" id="RGD:708365">
    <property type="organism name" value="rat"/>
</dbReference>
<dbReference type="AGR" id="RGD:708365"/>
<dbReference type="CTD" id="266689"/>
<dbReference type="RGD" id="708365">
    <property type="gene designation" value="Cyp4f6"/>
</dbReference>
<dbReference type="VEuPathDB" id="HostDB:ENSRNOG00000043233"/>
<dbReference type="eggNOG" id="KOG0157">
    <property type="taxonomic scope" value="Eukaryota"/>
</dbReference>
<dbReference type="InParanoid" id="P51871"/>
<dbReference type="OMA" id="IKQCARI"/>
<dbReference type="PhylomeDB" id="P51871"/>
<dbReference type="TreeFam" id="TF105088"/>
<dbReference type="PRO" id="PR:P51871"/>
<dbReference type="Proteomes" id="UP000002494">
    <property type="component" value="Chromosome 7"/>
</dbReference>
<dbReference type="Bgee" id="ENSRNOG00000043233">
    <property type="expression patterns" value="Expressed in liver and 19 other cell types or tissues"/>
</dbReference>
<dbReference type="ExpressionAtlas" id="P51871">
    <property type="expression patterns" value="baseline and differential"/>
</dbReference>
<dbReference type="GO" id="GO:0005789">
    <property type="term" value="C:endoplasmic reticulum membrane"/>
    <property type="evidence" value="ECO:0007669"/>
    <property type="project" value="UniProtKB-SubCell"/>
</dbReference>
<dbReference type="GO" id="GO:0020037">
    <property type="term" value="F:heme binding"/>
    <property type="evidence" value="ECO:0007669"/>
    <property type="project" value="InterPro"/>
</dbReference>
<dbReference type="GO" id="GO:0005506">
    <property type="term" value="F:iron ion binding"/>
    <property type="evidence" value="ECO:0007669"/>
    <property type="project" value="InterPro"/>
</dbReference>
<dbReference type="GO" id="GO:0016712">
    <property type="term" value="F:oxidoreductase activity, acting on paired donors, with incorporation or reduction of molecular oxygen, reduced flavin or flavoprotein as one donor, and incorporation of one atom of oxygen"/>
    <property type="evidence" value="ECO:0007669"/>
    <property type="project" value="UniProtKB-EC"/>
</dbReference>
<dbReference type="GO" id="GO:0006691">
    <property type="term" value="P:leukotriene metabolic process"/>
    <property type="evidence" value="ECO:0000315"/>
    <property type="project" value="RGD"/>
</dbReference>
<dbReference type="CDD" id="cd20679">
    <property type="entry name" value="CYP4F"/>
    <property type="match status" value="1"/>
</dbReference>
<dbReference type="FunFam" id="1.10.630.10:FF:000005">
    <property type="entry name" value="cytochrome P450 4F22 isoform X2"/>
    <property type="match status" value="1"/>
</dbReference>
<dbReference type="Gene3D" id="1.10.630.10">
    <property type="entry name" value="Cytochrome P450"/>
    <property type="match status" value="1"/>
</dbReference>
<dbReference type="InterPro" id="IPR001128">
    <property type="entry name" value="Cyt_P450"/>
</dbReference>
<dbReference type="InterPro" id="IPR017972">
    <property type="entry name" value="Cyt_P450_CS"/>
</dbReference>
<dbReference type="InterPro" id="IPR002403">
    <property type="entry name" value="Cyt_P450_E_grp-IV"/>
</dbReference>
<dbReference type="InterPro" id="IPR036396">
    <property type="entry name" value="Cyt_P450_sf"/>
</dbReference>
<dbReference type="InterPro" id="IPR050196">
    <property type="entry name" value="Cytochrome_P450_Monoox"/>
</dbReference>
<dbReference type="PANTHER" id="PTHR24291:SF141">
    <property type="entry name" value="CYTOCHROME P450 CYP4F13-RELATED"/>
    <property type="match status" value="1"/>
</dbReference>
<dbReference type="PANTHER" id="PTHR24291">
    <property type="entry name" value="CYTOCHROME P450 FAMILY 4"/>
    <property type="match status" value="1"/>
</dbReference>
<dbReference type="Pfam" id="PF00067">
    <property type="entry name" value="p450"/>
    <property type="match status" value="1"/>
</dbReference>
<dbReference type="PRINTS" id="PR00465">
    <property type="entry name" value="EP450IV"/>
</dbReference>
<dbReference type="PRINTS" id="PR00385">
    <property type="entry name" value="P450"/>
</dbReference>
<dbReference type="SUPFAM" id="SSF48264">
    <property type="entry name" value="Cytochrome P450"/>
    <property type="match status" value="1"/>
</dbReference>
<dbReference type="PROSITE" id="PS00086">
    <property type="entry name" value="CYTOCHROME_P450"/>
    <property type="match status" value="1"/>
</dbReference>
<evidence type="ECO:0000250" key="1">
    <source>
        <dbReference type="UniProtKB" id="P51869"/>
    </source>
</evidence>
<evidence type="ECO:0000305" key="2"/>
<name>CP4F6_RAT</name>